<gene>
    <name evidence="4 8" type="primary">Sprr2a3</name>
</gene>
<dbReference type="EMBL" id="AK147183">
    <property type="protein sequence ID" value="BAE27745.1"/>
    <property type="molecule type" value="mRNA"/>
</dbReference>
<dbReference type="EMBL" id="AK168529">
    <property type="protein sequence ID" value="BAE40407.1"/>
    <property type="molecule type" value="mRNA"/>
</dbReference>
<dbReference type="EMBL" id="CH466656">
    <property type="protein sequence ID" value="EDL00710.1"/>
    <property type="molecule type" value="Genomic_DNA"/>
</dbReference>
<dbReference type="EMBL" id="BC099393">
    <property type="protein sequence ID" value="AAH99393.1"/>
    <property type="molecule type" value="mRNA"/>
</dbReference>
<dbReference type="CCDS" id="CCDS84652.1"/>
<dbReference type="RefSeq" id="NP_001158259.1">
    <property type="nucleotide sequence ID" value="NM_001164787.1"/>
</dbReference>
<dbReference type="RefSeq" id="NP_001296311.1">
    <property type="nucleotide sequence ID" value="NM_001309382.1"/>
</dbReference>
<dbReference type="RefSeq" id="NP_035598.2">
    <property type="nucleotide sequence ID" value="NM_011468.4"/>
</dbReference>
<dbReference type="FunCoup" id="Q4KL71">
    <property type="interactions" value="10"/>
</dbReference>
<dbReference type="STRING" id="10090.ENSMUSP00000083330"/>
<dbReference type="PaxDb" id="10090-ENSMUSP00000083330"/>
<dbReference type="Ensembl" id="ENSMUST00000071805.4">
    <property type="protein sequence ID" value="ENSMUSP00000102950.2"/>
    <property type="gene ID" value="ENSMUSG00000068893.6"/>
</dbReference>
<dbReference type="Ensembl" id="ENSMUST00000074449.7">
    <property type="protein sequence ID" value="ENSMUSP00000083330.5"/>
    <property type="gene ID" value="ENSMUSG00000078664.3"/>
</dbReference>
<dbReference type="Ensembl" id="ENSMUST00000090871.3">
    <property type="protein sequence ID" value="ENSMUSP00000088386.3"/>
    <property type="gene ID" value="ENSMUSG00000068893.6"/>
</dbReference>
<dbReference type="Ensembl" id="ENSMUST00000090872.7">
    <property type="protein sequence ID" value="ENSMUSP00000088387.5"/>
    <property type="gene ID" value="ENSMUSG00000074445.5"/>
</dbReference>
<dbReference type="Ensembl" id="ENSMUST00000193337.2">
    <property type="protein sequence ID" value="ENSMUSP00000142110.2"/>
    <property type="gene ID" value="ENSMUSG00000074445.5"/>
</dbReference>
<dbReference type="GeneID" id="100042514"/>
<dbReference type="GeneID" id="100303744"/>
<dbReference type="GeneID" id="20755"/>
<dbReference type="KEGG" id="mmu:100042514"/>
<dbReference type="KEGG" id="mmu:100303744"/>
<dbReference type="KEGG" id="mmu:20755"/>
<dbReference type="UCSC" id="uc008qdq.1">
    <property type="organism name" value="mouse"/>
</dbReference>
<dbReference type="AGR" id="MGI:3845028"/>
<dbReference type="CTD" id="100042514"/>
<dbReference type="CTD" id="100303744"/>
<dbReference type="CTD" id="20755"/>
<dbReference type="MGI" id="MGI:3845028">
    <property type="gene designation" value="Sprr2a3"/>
</dbReference>
<dbReference type="VEuPathDB" id="HostDB:ENSMUSG00000068893"/>
<dbReference type="VEuPathDB" id="HostDB:ENSMUSG00000074445"/>
<dbReference type="VEuPathDB" id="HostDB:ENSMUSG00000078664"/>
<dbReference type="HOGENOM" id="CLU_192372_0_0_1"/>
<dbReference type="InParanoid" id="Q4KL71"/>
<dbReference type="BioGRID-ORCS" id="100042514">
    <property type="hits" value="0 hits in 6 CRISPR screens"/>
</dbReference>
<dbReference type="BioGRID-ORCS" id="100303744">
    <property type="hits" value="5 hits in 37 CRISPR screens"/>
</dbReference>
<dbReference type="BioGRID-ORCS" id="20755">
    <property type="hits" value="3 hits in 37 CRISPR screens"/>
</dbReference>
<dbReference type="ChiTaRS" id="Sprr2a3">
    <property type="organism name" value="mouse"/>
</dbReference>
<dbReference type="PRO" id="PR:Q4KL71"/>
<dbReference type="Proteomes" id="UP000000589">
    <property type="component" value="Chromosome 3"/>
</dbReference>
<dbReference type="RNAct" id="Q4KL71">
    <property type="molecule type" value="protein"/>
</dbReference>
<dbReference type="Bgee" id="ENSMUSG00000068893">
    <property type="expression patterns" value="Expressed in ileum and 36 other cell types or tissues"/>
</dbReference>
<dbReference type="ExpressionAtlas" id="Q4KL71">
    <property type="expression patterns" value="baseline and differential"/>
</dbReference>
<dbReference type="GO" id="GO:0001533">
    <property type="term" value="C:cornified envelope"/>
    <property type="evidence" value="ECO:0007669"/>
    <property type="project" value="InterPro"/>
</dbReference>
<dbReference type="GO" id="GO:0005576">
    <property type="term" value="C:extracellular region"/>
    <property type="evidence" value="ECO:0000314"/>
    <property type="project" value="UniProtKB"/>
</dbReference>
<dbReference type="GO" id="GO:0030141">
    <property type="term" value="C:secretory granule"/>
    <property type="evidence" value="ECO:0000314"/>
    <property type="project" value="UniProtKB"/>
</dbReference>
<dbReference type="GO" id="GO:0030133">
    <property type="term" value="C:transport vesicle"/>
    <property type="evidence" value="ECO:0007669"/>
    <property type="project" value="UniProtKB-SubCell"/>
</dbReference>
<dbReference type="GO" id="GO:0008289">
    <property type="term" value="F:lipid binding"/>
    <property type="evidence" value="ECO:0000250"/>
    <property type="project" value="UniProtKB"/>
</dbReference>
<dbReference type="GO" id="GO:0050830">
    <property type="term" value="P:defense response to Gram-positive bacterium"/>
    <property type="evidence" value="ECO:0000314"/>
    <property type="project" value="UniProtKB"/>
</dbReference>
<dbReference type="InterPro" id="IPR029142">
    <property type="entry name" value="SPRR2"/>
</dbReference>
<dbReference type="Pfam" id="PF14820">
    <property type="entry name" value="SPRR2"/>
    <property type="match status" value="1"/>
</dbReference>
<dbReference type="PRINTS" id="PR00021">
    <property type="entry name" value="PRORICH"/>
</dbReference>
<sequence length="83" mass="9408">MSYYQQQCNQPCRPPPVCPPPKCPEPCPPQVWPGPCRPVMCFEPCLPSVWPGPCRPVVCYEQCPPQPWQSTCPPVQFPPCQQK</sequence>
<evidence type="ECO:0000250" key="1">
    <source>
        <dbReference type="UniProtKB" id="P35326"/>
    </source>
</evidence>
<evidence type="ECO:0000255" key="2"/>
<evidence type="ECO:0000269" key="3">
    <source>
    </source>
</evidence>
<evidence type="ECO:0000303" key="4">
    <source>
    </source>
</evidence>
<evidence type="ECO:0000305" key="5"/>
<evidence type="ECO:0000312" key="6">
    <source>
        <dbReference type="EMBL" id="AAH99393.1"/>
    </source>
</evidence>
<evidence type="ECO:0000312" key="7">
    <source>
        <dbReference type="EMBL" id="EDL00710.1"/>
    </source>
</evidence>
<evidence type="ECO:0000312" key="8">
    <source>
        <dbReference type="MGI" id="MGI:3845028"/>
    </source>
</evidence>
<comment type="function">
    <text evidence="1 3">Gut bactericidal protein that selectively kills Gram-positive bacteria by binding to negatively charged lipids on bacterial membranes, leading to bacterial membrane permeabilization and disruption (PubMed:34735226). Specifically binds lipids bearing negatively charged headgroups, such as phosphatidic acid, phosphatidylserine (PS), cardiolipin (CL), and phosphatidylinositol phosphates, but not to zwitterionic or neutral lipids (By similarity). Induced by type-2 cytokines in response to helminth infection and is required to protect against helminth-induced bacterial invasion of intestinal tissue (PubMed:34735226). May also be involved in the development of the cornified envelope of squamous epithelia; however, additional evidences are required to confirm this result in vivo (By similarity).</text>
</comment>
<comment type="subcellular location">
    <subcellularLocation>
        <location evidence="3">Secreted</location>
    </subcellularLocation>
    <subcellularLocation>
        <location evidence="3">Secreted</location>
        <location evidence="3">Extracellular space</location>
    </subcellularLocation>
    <subcellularLocation>
        <location evidence="3">Cytoplasmic vesicle</location>
        <location evidence="3">Secretory vesicle</location>
    </subcellularLocation>
    <text evidence="3">Present in intestinal secretory epithelial cells and is secreted into the intestinal lumen.</text>
</comment>
<comment type="induction">
    <text evidence="3">By type-2 cytokines IL4 and IL13 in response to helminth infection.</text>
</comment>
<comment type="PTM">
    <text evidence="1">Forms five pairs of intrachain disulfide bonds.</text>
</comment>
<comment type="disruption phenotype">
    <text evidence="3">Mice lacking Sprr2a1, Sprr2a2 and Sprr2a3 show an expansion of Gram-positive bacteria in the small intestinal lumen and mucus layer (PubMed:34735226). Mice were born in normal Mendelian ratios, are healthy and show normal intestinal morphology with no signs of inflammation in normal conditions (PubMed:34735226). They however show an increased abundance of Gram-positive bacteria in the small intestinal lumen, with a marked increase in the relative abundance of Lactobacillus, Turicibacter, and C.arthromitus (PubMed:34735226). At the same time, a reduction in the abundance of Bacteroidetes, a class of Gram-negative bacteria is observed (PubMed:34735226). Mice are more susceptible to L.monocytogenes infection (PubMed:34735226).</text>
</comment>
<comment type="similarity">
    <text evidence="5">Belongs to the cornifin (SPRR) family.</text>
</comment>
<name>SP2A3_MOUSE</name>
<proteinExistence type="evidence at transcript level"/>
<protein>
    <recommendedName>
        <fullName evidence="5">Small proline-rich protein 2A3</fullName>
    </recommendedName>
</protein>
<keyword id="KW-0044">Antibiotic</keyword>
<keyword id="KW-0929">Antimicrobial</keyword>
<keyword id="KW-0968">Cytoplasmic vesicle</keyword>
<keyword id="KW-1015">Disulfide bond</keyword>
<keyword id="KW-0446">Lipid-binding</keyword>
<keyword id="KW-1185">Reference proteome</keyword>
<keyword id="KW-0677">Repeat</keyword>
<keyword id="KW-0964">Secreted</keyword>
<feature type="chain" id="PRO_0000425580" description="Small proline-rich protein 2A3">
    <location>
        <begin position="1"/>
        <end position="83"/>
    </location>
</feature>
<feature type="repeat" description="1" evidence="2">
    <location>
        <begin position="21"/>
        <end position="29"/>
    </location>
</feature>
<feature type="repeat" description="2" evidence="2">
    <location>
        <begin position="30"/>
        <end position="38"/>
    </location>
</feature>
<feature type="repeat" description="3" evidence="2">
    <location>
        <begin position="39"/>
        <end position="47"/>
    </location>
</feature>
<feature type="repeat" description="4" evidence="2">
    <location>
        <begin position="48"/>
        <end position="56"/>
    </location>
</feature>
<feature type="repeat" description="5" evidence="2">
    <location>
        <begin position="57"/>
        <end position="65"/>
    </location>
</feature>
<feature type="region of interest" description="5 X 9 AA approximate tandem repeats" evidence="2">
    <location>
        <begin position="21"/>
        <end position="65"/>
    </location>
</feature>
<reference key="1">
    <citation type="journal article" date="2005" name="Science">
        <title>The transcriptional landscape of the mammalian genome.</title>
        <authorList>
            <person name="Carninci P."/>
            <person name="Kasukawa T."/>
            <person name="Katayama S."/>
            <person name="Gough J."/>
            <person name="Frith M.C."/>
            <person name="Maeda N."/>
            <person name="Oyama R."/>
            <person name="Ravasi T."/>
            <person name="Lenhard B."/>
            <person name="Wells C."/>
            <person name="Kodzius R."/>
            <person name="Shimokawa K."/>
            <person name="Bajic V.B."/>
            <person name="Brenner S.E."/>
            <person name="Batalov S."/>
            <person name="Forrest A.R."/>
            <person name="Zavolan M."/>
            <person name="Davis M.J."/>
            <person name="Wilming L.G."/>
            <person name="Aidinis V."/>
            <person name="Allen J.E."/>
            <person name="Ambesi-Impiombato A."/>
            <person name="Apweiler R."/>
            <person name="Aturaliya R.N."/>
            <person name="Bailey T.L."/>
            <person name="Bansal M."/>
            <person name="Baxter L."/>
            <person name="Beisel K.W."/>
            <person name="Bersano T."/>
            <person name="Bono H."/>
            <person name="Chalk A.M."/>
            <person name="Chiu K.P."/>
            <person name="Choudhary V."/>
            <person name="Christoffels A."/>
            <person name="Clutterbuck D.R."/>
            <person name="Crowe M.L."/>
            <person name="Dalla E."/>
            <person name="Dalrymple B.P."/>
            <person name="de Bono B."/>
            <person name="Della Gatta G."/>
            <person name="di Bernardo D."/>
            <person name="Down T."/>
            <person name="Engstrom P."/>
            <person name="Fagiolini M."/>
            <person name="Faulkner G."/>
            <person name="Fletcher C.F."/>
            <person name="Fukushima T."/>
            <person name="Furuno M."/>
            <person name="Futaki S."/>
            <person name="Gariboldi M."/>
            <person name="Georgii-Hemming P."/>
            <person name="Gingeras T.R."/>
            <person name="Gojobori T."/>
            <person name="Green R.E."/>
            <person name="Gustincich S."/>
            <person name="Harbers M."/>
            <person name="Hayashi Y."/>
            <person name="Hensch T.K."/>
            <person name="Hirokawa N."/>
            <person name="Hill D."/>
            <person name="Huminiecki L."/>
            <person name="Iacono M."/>
            <person name="Ikeo K."/>
            <person name="Iwama A."/>
            <person name="Ishikawa T."/>
            <person name="Jakt M."/>
            <person name="Kanapin A."/>
            <person name="Katoh M."/>
            <person name="Kawasawa Y."/>
            <person name="Kelso J."/>
            <person name="Kitamura H."/>
            <person name="Kitano H."/>
            <person name="Kollias G."/>
            <person name="Krishnan S.P."/>
            <person name="Kruger A."/>
            <person name="Kummerfeld S.K."/>
            <person name="Kurochkin I.V."/>
            <person name="Lareau L.F."/>
            <person name="Lazarevic D."/>
            <person name="Lipovich L."/>
            <person name="Liu J."/>
            <person name="Liuni S."/>
            <person name="McWilliam S."/>
            <person name="Madan Babu M."/>
            <person name="Madera M."/>
            <person name="Marchionni L."/>
            <person name="Matsuda H."/>
            <person name="Matsuzawa S."/>
            <person name="Miki H."/>
            <person name="Mignone F."/>
            <person name="Miyake S."/>
            <person name="Morris K."/>
            <person name="Mottagui-Tabar S."/>
            <person name="Mulder N."/>
            <person name="Nakano N."/>
            <person name="Nakauchi H."/>
            <person name="Ng P."/>
            <person name="Nilsson R."/>
            <person name="Nishiguchi S."/>
            <person name="Nishikawa S."/>
            <person name="Nori F."/>
            <person name="Ohara O."/>
            <person name="Okazaki Y."/>
            <person name="Orlando V."/>
            <person name="Pang K.C."/>
            <person name="Pavan W.J."/>
            <person name="Pavesi G."/>
            <person name="Pesole G."/>
            <person name="Petrovsky N."/>
            <person name="Piazza S."/>
            <person name="Reed J."/>
            <person name="Reid J.F."/>
            <person name="Ring B.Z."/>
            <person name="Ringwald M."/>
            <person name="Rost B."/>
            <person name="Ruan Y."/>
            <person name="Salzberg S.L."/>
            <person name="Sandelin A."/>
            <person name="Schneider C."/>
            <person name="Schoenbach C."/>
            <person name="Sekiguchi K."/>
            <person name="Semple C.A."/>
            <person name="Seno S."/>
            <person name="Sessa L."/>
            <person name="Sheng Y."/>
            <person name="Shibata Y."/>
            <person name="Shimada H."/>
            <person name="Shimada K."/>
            <person name="Silva D."/>
            <person name="Sinclair B."/>
            <person name="Sperling S."/>
            <person name="Stupka E."/>
            <person name="Sugiura K."/>
            <person name="Sultana R."/>
            <person name="Takenaka Y."/>
            <person name="Taki K."/>
            <person name="Tammoja K."/>
            <person name="Tan S.L."/>
            <person name="Tang S."/>
            <person name="Taylor M.S."/>
            <person name="Tegner J."/>
            <person name="Teichmann S.A."/>
            <person name="Ueda H.R."/>
            <person name="van Nimwegen E."/>
            <person name="Verardo R."/>
            <person name="Wei C.L."/>
            <person name="Yagi K."/>
            <person name="Yamanishi H."/>
            <person name="Zabarovsky E."/>
            <person name="Zhu S."/>
            <person name="Zimmer A."/>
            <person name="Hide W."/>
            <person name="Bult C."/>
            <person name="Grimmond S.M."/>
            <person name="Teasdale R.D."/>
            <person name="Liu E.T."/>
            <person name="Brusic V."/>
            <person name="Quackenbush J."/>
            <person name="Wahlestedt C."/>
            <person name="Mattick J.S."/>
            <person name="Hume D.A."/>
            <person name="Kai C."/>
            <person name="Sasaki D."/>
            <person name="Tomaru Y."/>
            <person name="Fukuda S."/>
            <person name="Kanamori-Katayama M."/>
            <person name="Suzuki M."/>
            <person name="Aoki J."/>
            <person name="Arakawa T."/>
            <person name="Iida J."/>
            <person name="Imamura K."/>
            <person name="Itoh M."/>
            <person name="Kato T."/>
            <person name="Kawaji H."/>
            <person name="Kawagashira N."/>
            <person name="Kawashima T."/>
            <person name="Kojima M."/>
            <person name="Kondo S."/>
            <person name="Konno H."/>
            <person name="Nakano K."/>
            <person name="Ninomiya N."/>
            <person name="Nishio T."/>
            <person name="Okada M."/>
            <person name="Plessy C."/>
            <person name="Shibata K."/>
            <person name="Shiraki T."/>
            <person name="Suzuki S."/>
            <person name="Tagami M."/>
            <person name="Waki K."/>
            <person name="Watahiki A."/>
            <person name="Okamura-Oho Y."/>
            <person name="Suzuki H."/>
            <person name="Kawai J."/>
            <person name="Hayashizaki Y."/>
        </authorList>
    </citation>
    <scope>NUCLEOTIDE SEQUENCE [LARGE SCALE MRNA]</scope>
    <source>
        <strain>C57BL/6J</strain>
        <tissue>Amnion</tissue>
    </source>
</reference>
<reference evidence="7" key="2">
    <citation type="submission" date="2005-07" db="EMBL/GenBank/DDBJ databases">
        <authorList>
            <person name="Mural R.J."/>
            <person name="Adams M.D."/>
            <person name="Myers E.W."/>
            <person name="Smith H.O."/>
            <person name="Venter J.C."/>
        </authorList>
    </citation>
    <scope>NUCLEOTIDE SEQUENCE [LARGE SCALE GENOMIC DNA]</scope>
</reference>
<reference evidence="6" key="3">
    <citation type="journal article" date="2004" name="Genome Res.">
        <title>The status, quality, and expansion of the NIH full-length cDNA project: the Mammalian Gene Collection (MGC).</title>
        <authorList>
            <consortium name="The MGC Project Team"/>
        </authorList>
    </citation>
    <scope>NUCLEOTIDE SEQUENCE [LARGE SCALE MRNA]</scope>
    <source>
        <strain evidence="6">C57BL/6NCr</strain>
        <tissue evidence="6">Placenta</tissue>
    </source>
</reference>
<reference key="4">
    <citation type="journal article" date="2021" name="Science">
        <title>Small proline-rich protein 2A is a gut bactericidal protein deployed during helminth infection.</title>
        <authorList>
            <person name="Hu Z."/>
            <person name="Zhang C."/>
            <person name="Sifuentes-Dominguez L."/>
            <person name="Zarek C.M."/>
            <person name="Propheter D.C."/>
            <person name="Kuang Z."/>
            <person name="Wang Y."/>
            <person name="Pendse M."/>
            <person name="Ruhn K.A."/>
            <person name="Hassell B."/>
            <person name="Behrendt C.L."/>
            <person name="Zhang B."/>
            <person name="Raj P."/>
            <person name="Harris-Tryon T.A."/>
            <person name="Reese T.A."/>
            <person name="Hooper L.V."/>
        </authorList>
    </citation>
    <scope>FUNCTION</scope>
    <scope>SUBCELLULAR LOCATION</scope>
    <scope>INDUCTION</scope>
    <scope>DISRUPTION PHENOTYPE</scope>
</reference>
<accession>Q4KL71</accession>
<organism>
    <name type="scientific">Mus musculus</name>
    <name type="common">Mouse</name>
    <dbReference type="NCBI Taxonomy" id="10090"/>
    <lineage>
        <taxon>Eukaryota</taxon>
        <taxon>Metazoa</taxon>
        <taxon>Chordata</taxon>
        <taxon>Craniata</taxon>
        <taxon>Vertebrata</taxon>
        <taxon>Euteleostomi</taxon>
        <taxon>Mammalia</taxon>
        <taxon>Eutheria</taxon>
        <taxon>Euarchontoglires</taxon>
        <taxon>Glires</taxon>
        <taxon>Rodentia</taxon>
        <taxon>Myomorpha</taxon>
        <taxon>Muroidea</taxon>
        <taxon>Muridae</taxon>
        <taxon>Murinae</taxon>
        <taxon>Mus</taxon>
        <taxon>Mus</taxon>
    </lineage>
</organism>